<reference key="1">
    <citation type="journal article" date="2006" name="Genome Res.">
        <title>Skewed genomic variability in strains of the toxigenic bacterial pathogen, Clostridium perfringens.</title>
        <authorList>
            <person name="Myers G.S.A."/>
            <person name="Rasko D.A."/>
            <person name="Cheung J.K."/>
            <person name="Ravel J."/>
            <person name="Seshadri R."/>
            <person name="DeBoy R.T."/>
            <person name="Ren Q."/>
            <person name="Varga J."/>
            <person name="Awad M.M."/>
            <person name="Brinkac L.M."/>
            <person name="Daugherty S.C."/>
            <person name="Haft D.H."/>
            <person name="Dodson R.J."/>
            <person name="Madupu R."/>
            <person name="Nelson W.C."/>
            <person name="Rosovitz M.J."/>
            <person name="Sullivan S.A."/>
            <person name="Khouri H."/>
            <person name="Dimitrov G.I."/>
            <person name="Watkins K.L."/>
            <person name="Mulligan S."/>
            <person name="Benton J."/>
            <person name="Radune D."/>
            <person name="Fisher D.J."/>
            <person name="Atkins H.S."/>
            <person name="Hiscox T."/>
            <person name="Jost B.H."/>
            <person name="Billington S.J."/>
            <person name="Songer J.G."/>
            <person name="McClane B.A."/>
            <person name="Titball R.W."/>
            <person name="Rood J.I."/>
            <person name="Melville S.B."/>
            <person name="Paulsen I.T."/>
        </authorList>
    </citation>
    <scope>NUCLEOTIDE SEQUENCE [LARGE SCALE GENOMIC DNA]</scope>
    <source>
        <strain>SM101 / Type A</strain>
    </source>
</reference>
<organism>
    <name type="scientific">Clostridium perfringens (strain SM101 / Type A)</name>
    <dbReference type="NCBI Taxonomy" id="289380"/>
    <lineage>
        <taxon>Bacteria</taxon>
        <taxon>Bacillati</taxon>
        <taxon>Bacillota</taxon>
        <taxon>Clostridia</taxon>
        <taxon>Eubacteriales</taxon>
        <taxon>Clostridiaceae</taxon>
        <taxon>Clostridium</taxon>
    </lineage>
</organism>
<proteinExistence type="inferred from homology"/>
<sequence>MIKITLKDGSIKEVEAGLSIFEIAQSISQGLARNACCGILNGKVEDLRFIVNEDSSLEICTFDSKEGQHAFNHTASHVLAAAVKRLFPQDKLAIGPSIDNGFYYDFDTEKSFSADQLNKLEEEMKKIIKENPEIKRFELPRNEALELMKDEPYKVELINDLPEGEVISFYQIGDFVDLCAGPHLMAVKPIKAVKLLRSTGAYWKGDEKNKMLSRVYGTAFPKKSELDAYLEALEEAKKRDHNKLGRELGIFTTDENVGQGLPLLMPKGARIIQTLQRWIEDEEQRRGYVLTKTPLMAKSDLYKISGHWDHYKDGMFVLGDEEKDSEVFALRPMTCPFQYAIYNSTQHSYRDLPVRFAETSTLFRNESSGEMHGLIRVRQFTLADGHIVCTPEQLEDEFKNTVDLVKYVMETLGIADDITYRFSKWDPNNTEKYINDPEAWENTQNIMREILNHLNIDFTEADDEAAFYGPKLDIQFKNVHGKEDTIITIQIDFALAERFGMYYIDKDGEKKRPYIIHRSSIGCYERTLAMLIEKYAGALPTWIAPVQAKVLPLSDKYADYANEVVEELRRRGVRVEADHRAEKIGYKIREARLERTPYILVVGEKEAENKEVSVRSRKNGEEGAMPLADFVNRIVLEIANREN</sequence>
<protein>
    <recommendedName>
        <fullName evidence="1">Threonine--tRNA ligase</fullName>
        <ecNumber evidence="1">6.1.1.3</ecNumber>
    </recommendedName>
    <alternativeName>
        <fullName evidence="1">Threonyl-tRNA synthetase</fullName>
        <shortName evidence="1">ThrRS</shortName>
    </alternativeName>
</protein>
<accession>Q0SQM4</accession>
<feature type="chain" id="PRO_1000020374" description="Threonine--tRNA ligase">
    <location>
        <begin position="1"/>
        <end position="643"/>
    </location>
</feature>
<feature type="domain" description="TGS" evidence="2">
    <location>
        <begin position="1"/>
        <end position="61"/>
    </location>
</feature>
<feature type="region of interest" description="Catalytic" evidence="1">
    <location>
        <begin position="240"/>
        <end position="540"/>
    </location>
</feature>
<feature type="binding site" evidence="1">
    <location>
        <position position="335"/>
    </location>
    <ligand>
        <name>Zn(2+)</name>
        <dbReference type="ChEBI" id="CHEBI:29105"/>
    </ligand>
</feature>
<feature type="binding site" evidence="1">
    <location>
        <position position="386"/>
    </location>
    <ligand>
        <name>Zn(2+)</name>
        <dbReference type="ChEBI" id="CHEBI:29105"/>
    </ligand>
</feature>
<feature type="binding site" evidence="1">
    <location>
        <position position="517"/>
    </location>
    <ligand>
        <name>Zn(2+)</name>
        <dbReference type="ChEBI" id="CHEBI:29105"/>
    </ligand>
</feature>
<evidence type="ECO:0000255" key="1">
    <source>
        <dbReference type="HAMAP-Rule" id="MF_00184"/>
    </source>
</evidence>
<evidence type="ECO:0000255" key="2">
    <source>
        <dbReference type="PROSITE-ProRule" id="PRU01228"/>
    </source>
</evidence>
<comment type="function">
    <text evidence="1">Catalyzes the attachment of threonine to tRNA(Thr) in a two-step reaction: L-threonine is first activated by ATP to form Thr-AMP and then transferred to the acceptor end of tRNA(Thr). Also edits incorrectly charged L-seryl-tRNA(Thr).</text>
</comment>
<comment type="catalytic activity">
    <reaction evidence="1">
        <text>tRNA(Thr) + L-threonine + ATP = L-threonyl-tRNA(Thr) + AMP + diphosphate + H(+)</text>
        <dbReference type="Rhea" id="RHEA:24624"/>
        <dbReference type="Rhea" id="RHEA-COMP:9670"/>
        <dbReference type="Rhea" id="RHEA-COMP:9704"/>
        <dbReference type="ChEBI" id="CHEBI:15378"/>
        <dbReference type="ChEBI" id="CHEBI:30616"/>
        <dbReference type="ChEBI" id="CHEBI:33019"/>
        <dbReference type="ChEBI" id="CHEBI:57926"/>
        <dbReference type="ChEBI" id="CHEBI:78442"/>
        <dbReference type="ChEBI" id="CHEBI:78534"/>
        <dbReference type="ChEBI" id="CHEBI:456215"/>
        <dbReference type="EC" id="6.1.1.3"/>
    </reaction>
</comment>
<comment type="cofactor">
    <cofactor evidence="1">
        <name>Zn(2+)</name>
        <dbReference type="ChEBI" id="CHEBI:29105"/>
    </cofactor>
    <text evidence="1">Binds 1 zinc ion per subunit.</text>
</comment>
<comment type="subunit">
    <text evidence="1">Homodimer.</text>
</comment>
<comment type="subcellular location">
    <subcellularLocation>
        <location evidence="1">Cytoplasm</location>
    </subcellularLocation>
</comment>
<comment type="similarity">
    <text evidence="1">Belongs to the class-II aminoacyl-tRNA synthetase family.</text>
</comment>
<gene>
    <name evidence="1" type="primary">thrS</name>
    <name type="ordered locus">CPR_2317</name>
</gene>
<name>SYT_CLOPS</name>
<keyword id="KW-0030">Aminoacyl-tRNA synthetase</keyword>
<keyword id="KW-0067">ATP-binding</keyword>
<keyword id="KW-0963">Cytoplasm</keyword>
<keyword id="KW-0436">Ligase</keyword>
<keyword id="KW-0479">Metal-binding</keyword>
<keyword id="KW-0547">Nucleotide-binding</keyword>
<keyword id="KW-0648">Protein biosynthesis</keyword>
<keyword id="KW-0694">RNA-binding</keyword>
<keyword id="KW-0820">tRNA-binding</keyword>
<keyword id="KW-0862">Zinc</keyword>
<dbReference type="EC" id="6.1.1.3" evidence="1"/>
<dbReference type="EMBL" id="CP000312">
    <property type="protein sequence ID" value="ABG86169.1"/>
    <property type="molecule type" value="Genomic_DNA"/>
</dbReference>
<dbReference type="RefSeq" id="WP_011593088.1">
    <property type="nucleotide sequence ID" value="NC_008262.1"/>
</dbReference>
<dbReference type="SMR" id="Q0SQM4"/>
<dbReference type="KEGG" id="cpr:CPR_2317"/>
<dbReference type="Proteomes" id="UP000001824">
    <property type="component" value="Chromosome"/>
</dbReference>
<dbReference type="GO" id="GO:0005737">
    <property type="term" value="C:cytoplasm"/>
    <property type="evidence" value="ECO:0007669"/>
    <property type="project" value="UniProtKB-SubCell"/>
</dbReference>
<dbReference type="GO" id="GO:0005524">
    <property type="term" value="F:ATP binding"/>
    <property type="evidence" value="ECO:0007669"/>
    <property type="project" value="UniProtKB-UniRule"/>
</dbReference>
<dbReference type="GO" id="GO:0140096">
    <property type="term" value="F:catalytic activity, acting on a protein"/>
    <property type="evidence" value="ECO:0007669"/>
    <property type="project" value="UniProtKB-ARBA"/>
</dbReference>
<dbReference type="GO" id="GO:0046872">
    <property type="term" value="F:metal ion binding"/>
    <property type="evidence" value="ECO:0007669"/>
    <property type="project" value="UniProtKB-KW"/>
</dbReference>
<dbReference type="GO" id="GO:0004829">
    <property type="term" value="F:threonine-tRNA ligase activity"/>
    <property type="evidence" value="ECO:0007669"/>
    <property type="project" value="UniProtKB-UniRule"/>
</dbReference>
<dbReference type="GO" id="GO:0016740">
    <property type="term" value="F:transferase activity"/>
    <property type="evidence" value="ECO:0007669"/>
    <property type="project" value="UniProtKB-ARBA"/>
</dbReference>
<dbReference type="GO" id="GO:0000049">
    <property type="term" value="F:tRNA binding"/>
    <property type="evidence" value="ECO:0007669"/>
    <property type="project" value="UniProtKB-KW"/>
</dbReference>
<dbReference type="GO" id="GO:0006435">
    <property type="term" value="P:threonyl-tRNA aminoacylation"/>
    <property type="evidence" value="ECO:0007669"/>
    <property type="project" value="UniProtKB-UniRule"/>
</dbReference>
<dbReference type="CDD" id="cd01667">
    <property type="entry name" value="TGS_ThrRS"/>
    <property type="match status" value="1"/>
</dbReference>
<dbReference type="CDD" id="cd00860">
    <property type="entry name" value="ThrRS_anticodon"/>
    <property type="match status" value="1"/>
</dbReference>
<dbReference type="CDD" id="cd00771">
    <property type="entry name" value="ThrRS_core"/>
    <property type="match status" value="1"/>
</dbReference>
<dbReference type="FunFam" id="3.30.54.20:FF:000002">
    <property type="entry name" value="Threonine--tRNA ligase"/>
    <property type="match status" value="1"/>
</dbReference>
<dbReference type="FunFam" id="3.30.930.10:FF:000002">
    <property type="entry name" value="Threonine--tRNA ligase"/>
    <property type="match status" value="1"/>
</dbReference>
<dbReference type="FunFam" id="3.40.50.800:FF:000001">
    <property type="entry name" value="Threonine--tRNA ligase"/>
    <property type="match status" value="1"/>
</dbReference>
<dbReference type="FunFam" id="3.30.980.10:FF:000005">
    <property type="entry name" value="Threonyl-tRNA synthetase, mitochondrial"/>
    <property type="match status" value="1"/>
</dbReference>
<dbReference type="Gene3D" id="3.10.20.30">
    <property type="match status" value="1"/>
</dbReference>
<dbReference type="Gene3D" id="3.40.50.800">
    <property type="entry name" value="Anticodon-binding domain"/>
    <property type="match status" value="1"/>
</dbReference>
<dbReference type="Gene3D" id="3.30.930.10">
    <property type="entry name" value="Bira Bifunctional Protein, Domain 2"/>
    <property type="match status" value="1"/>
</dbReference>
<dbReference type="Gene3D" id="3.30.980.10">
    <property type="entry name" value="Threonyl-trna Synthetase, Chain A, domain 2"/>
    <property type="match status" value="1"/>
</dbReference>
<dbReference type="HAMAP" id="MF_00184">
    <property type="entry name" value="Thr_tRNA_synth"/>
    <property type="match status" value="1"/>
</dbReference>
<dbReference type="InterPro" id="IPR002314">
    <property type="entry name" value="aa-tRNA-synt_IIb"/>
</dbReference>
<dbReference type="InterPro" id="IPR006195">
    <property type="entry name" value="aa-tRNA-synth_II"/>
</dbReference>
<dbReference type="InterPro" id="IPR045864">
    <property type="entry name" value="aa-tRNA-synth_II/BPL/LPL"/>
</dbReference>
<dbReference type="InterPro" id="IPR004154">
    <property type="entry name" value="Anticodon-bd"/>
</dbReference>
<dbReference type="InterPro" id="IPR036621">
    <property type="entry name" value="Anticodon-bd_dom_sf"/>
</dbReference>
<dbReference type="InterPro" id="IPR012675">
    <property type="entry name" value="Beta-grasp_dom_sf"/>
</dbReference>
<dbReference type="InterPro" id="IPR004095">
    <property type="entry name" value="TGS"/>
</dbReference>
<dbReference type="InterPro" id="IPR012676">
    <property type="entry name" value="TGS-like"/>
</dbReference>
<dbReference type="InterPro" id="IPR002320">
    <property type="entry name" value="Thr-tRNA-ligase_IIa"/>
</dbReference>
<dbReference type="InterPro" id="IPR018163">
    <property type="entry name" value="Thr/Ala-tRNA-synth_IIc_edit"/>
</dbReference>
<dbReference type="InterPro" id="IPR047246">
    <property type="entry name" value="ThrRS_anticodon"/>
</dbReference>
<dbReference type="InterPro" id="IPR033728">
    <property type="entry name" value="ThrRS_core"/>
</dbReference>
<dbReference type="InterPro" id="IPR012947">
    <property type="entry name" value="tRNA_SAD"/>
</dbReference>
<dbReference type="NCBIfam" id="TIGR00418">
    <property type="entry name" value="thrS"/>
    <property type="match status" value="1"/>
</dbReference>
<dbReference type="PANTHER" id="PTHR11451:SF56">
    <property type="entry name" value="THREONINE--TRNA LIGASE 1"/>
    <property type="match status" value="1"/>
</dbReference>
<dbReference type="PANTHER" id="PTHR11451">
    <property type="entry name" value="THREONINE-TRNA LIGASE"/>
    <property type="match status" value="1"/>
</dbReference>
<dbReference type="Pfam" id="PF03129">
    <property type="entry name" value="HGTP_anticodon"/>
    <property type="match status" value="1"/>
</dbReference>
<dbReference type="Pfam" id="PF02824">
    <property type="entry name" value="TGS"/>
    <property type="match status" value="1"/>
</dbReference>
<dbReference type="Pfam" id="PF00587">
    <property type="entry name" value="tRNA-synt_2b"/>
    <property type="match status" value="1"/>
</dbReference>
<dbReference type="Pfam" id="PF07973">
    <property type="entry name" value="tRNA_SAD"/>
    <property type="match status" value="1"/>
</dbReference>
<dbReference type="PRINTS" id="PR01047">
    <property type="entry name" value="TRNASYNTHTHR"/>
</dbReference>
<dbReference type="SMART" id="SM00863">
    <property type="entry name" value="tRNA_SAD"/>
    <property type="match status" value="1"/>
</dbReference>
<dbReference type="SUPFAM" id="SSF52954">
    <property type="entry name" value="Class II aaRS ABD-related"/>
    <property type="match status" value="1"/>
</dbReference>
<dbReference type="SUPFAM" id="SSF55681">
    <property type="entry name" value="Class II aaRS and biotin synthetases"/>
    <property type="match status" value="1"/>
</dbReference>
<dbReference type="SUPFAM" id="SSF81271">
    <property type="entry name" value="TGS-like"/>
    <property type="match status" value="1"/>
</dbReference>
<dbReference type="SUPFAM" id="SSF55186">
    <property type="entry name" value="ThrRS/AlaRS common domain"/>
    <property type="match status" value="1"/>
</dbReference>
<dbReference type="PROSITE" id="PS50862">
    <property type="entry name" value="AA_TRNA_LIGASE_II"/>
    <property type="match status" value="1"/>
</dbReference>
<dbReference type="PROSITE" id="PS51880">
    <property type="entry name" value="TGS"/>
    <property type="match status" value="1"/>
</dbReference>